<organism>
    <name type="scientific">Azotobacter vinelandii</name>
    <dbReference type="NCBI Taxonomy" id="354"/>
    <lineage>
        <taxon>Bacteria</taxon>
        <taxon>Pseudomonadati</taxon>
        <taxon>Pseudomonadota</taxon>
        <taxon>Gammaproteobacteria</taxon>
        <taxon>Pseudomonadales</taxon>
        <taxon>Pseudomonadaceae</taxon>
        <taxon>Azotobacter</taxon>
    </lineage>
</organism>
<comment type="function">
    <text>Could be a 3Fe-4S cluster-containing protein.</text>
</comment>
<comment type="similarity">
    <text evidence="2">To ferredoxins from P.putida and C.tartarivorum, ferredoxin I from A.vinelandii, ferredoxin II from D.desulfuricans.</text>
</comment>
<protein>
    <recommendedName>
        <fullName>Ferredoxin-like protein</fullName>
    </recommendedName>
</protein>
<name>FIXX_AZOVI</name>
<accession>P53658</accession>
<evidence type="ECO:0000255" key="1">
    <source>
        <dbReference type="PROSITE-ProRule" id="PRU00711"/>
    </source>
</evidence>
<evidence type="ECO:0000305" key="2"/>
<dbReference type="EMBL" id="X65515">
    <property type="protein sequence ID" value="CAA46491.1"/>
    <property type="molecule type" value="Genomic_DNA"/>
</dbReference>
<dbReference type="PIR" id="S49190">
    <property type="entry name" value="S49190"/>
</dbReference>
<dbReference type="SMR" id="P53658"/>
<dbReference type="BioCyc" id="MetaCyc:MONOMER-21376"/>
<dbReference type="GO" id="GO:0005506">
    <property type="term" value="F:iron ion binding"/>
    <property type="evidence" value="ECO:0007669"/>
    <property type="project" value="InterPro"/>
</dbReference>
<dbReference type="GO" id="GO:0051536">
    <property type="term" value="F:iron-sulfur cluster binding"/>
    <property type="evidence" value="ECO:0007669"/>
    <property type="project" value="UniProtKB-KW"/>
</dbReference>
<dbReference type="GO" id="GO:0009399">
    <property type="term" value="P:nitrogen fixation"/>
    <property type="evidence" value="ECO:0007669"/>
    <property type="project" value="UniProtKB-KW"/>
</dbReference>
<dbReference type="Gene3D" id="3.30.70.20">
    <property type="match status" value="1"/>
</dbReference>
<dbReference type="InterPro" id="IPR017896">
    <property type="entry name" value="4Fe4S_Fe-S-bd"/>
</dbReference>
<dbReference type="InterPro" id="IPR007859">
    <property type="entry name" value="ETF-QO/FixX_C"/>
</dbReference>
<dbReference type="InterPro" id="IPR012206">
    <property type="entry name" value="Fd_FixX"/>
</dbReference>
<dbReference type="PANTHER" id="PTHR43082">
    <property type="entry name" value="FERREDOXIN-LIKE"/>
    <property type="match status" value="1"/>
</dbReference>
<dbReference type="PANTHER" id="PTHR43082:SF3">
    <property type="entry name" value="FERREDOXIN-LIKE PROTEIN YDIT"/>
    <property type="match status" value="1"/>
</dbReference>
<dbReference type="Pfam" id="PF05187">
    <property type="entry name" value="Fer4_ETF_QO"/>
    <property type="match status" value="1"/>
</dbReference>
<dbReference type="PIRSF" id="PIRSF036548">
    <property type="entry name" value="Fdx_FixX"/>
    <property type="match status" value="1"/>
</dbReference>
<dbReference type="SUPFAM" id="SSF54862">
    <property type="entry name" value="4Fe-4S ferredoxins"/>
    <property type="match status" value="1"/>
</dbReference>
<dbReference type="PROSITE" id="PS51379">
    <property type="entry name" value="4FE4S_FER_2"/>
    <property type="match status" value="2"/>
</dbReference>
<proteinExistence type="predicted"/>
<reference key="1">
    <citation type="submission" date="1994-07" db="EMBL/GenBank/DDBJ databases">
        <authorList>
            <person name="Wientjens R."/>
            <person name="van Dongen W."/>
            <person name="Haaker H."/>
        </authorList>
    </citation>
    <scope>NUCLEOTIDE SEQUENCE [GENOMIC DNA]</scope>
    <source>
        <strain>ATCC 478 / DSM 2289 / BCRC 14361 / JCM 21475 / KCTC 12137 / NBRC 102612 / NCIMB 12096 / NRRL B-14641 / VKM B-1617 / NRS 16</strain>
    </source>
</reference>
<gene>
    <name type="primary">fixX</name>
</gene>
<sequence>MSKIEEKLFQDRYRVDSGRPHIRIKDPDHCTELSEKQCTVCCPAGCYTRETNGKVTLVTDGCLECGTCRIICQDSGNLEWEWPRGGFGILFKFG</sequence>
<keyword id="KW-0249">Electron transport</keyword>
<keyword id="KW-0408">Iron</keyword>
<keyword id="KW-0411">Iron-sulfur</keyword>
<keyword id="KW-0479">Metal-binding</keyword>
<keyword id="KW-0535">Nitrogen fixation</keyword>
<keyword id="KW-0677">Repeat</keyword>
<keyword id="KW-0813">Transport</keyword>
<feature type="chain" id="PRO_0000159205" description="Ferredoxin-like protein">
    <location>
        <begin position="1"/>
        <end position="94"/>
    </location>
</feature>
<feature type="domain" description="4Fe-4S ferredoxin-type 1" evidence="1">
    <location>
        <begin position="20"/>
        <end position="52"/>
    </location>
</feature>
<feature type="domain" description="4Fe-4S ferredoxin-type 2" evidence="1">
    <location>
        <begin position="53"/>
        <end position="83"/>
    </location>
</feature>